<feature type="chain" id="PRO_1000014985" description="Small ribosomal subunit protein uS10">
    <location>
        <begin position="1"/>
        <end position="103"/>
    </location>
</feature>
<comment type="function">
    <text evidence="1">Involved in the binding of tRNA to the ribosomes.</text>
</comment>
<comment type="subunit">
    <text evidence="1">Part of the 30S ribosomal subunit.</text>
</comment>
<comment type="similarity">
    <text evidence="1">Belongs to the universal ribosomal protein uS10 family.</text>
</comment>
<protein>
    <recommendedName>
        <fullName evidence="1">Small ribosomal subunit protein uS10</fullName>
    </recommendedName>
    <alternativeName>
        <fullName evidence="2">30S ribosomal protein S10</fullName>
    </alternativeName>
</protein>
<evidence type="ECO:0000255" key="1">
    <source>
        <dbReference type="HAMAP-Rule" id="MF_00508"/>
    </source>
</evidence>
<evidence type="ECO:0000305" key="2"/>
<keyword id="KW-1185">Reference proteome</keyword>
<keyword id="KW-0687">Ribonucleoprotein</keyword>
<keyword id="KW-0689">Ribosomal protein</keyword>
<sequence>MQNQKIRIRLKAFDYRLIDQSALEIVDTAKRTGAVVRGPVPLPTRIERFNLLRSPHVNKTSRDQMEIRTHQRLMDIIDPTDKTVDALMKLDLPAGVDVEIKLQ</sequence>
<dbReference type="EMBL" id="AM406670">
    <property type="protein sequence ID" value="CAL96034.1"/>
    <property type="molecule type" value="Genomic_DNA"/>
</dbReference>
<dbReference type="RefSeq" id="WP_011767141.1">
    <property type="nucleotide sequence ID" value="NC_008702.1"/>
</dbReference>
<dbReference type="SMR" id="A1KB28"/>
<dbReference type="STRING" id="62928.azo3418"/>
<dbReference type="KEGG" id="aoa:dqs_3557"/>
<dbReference type="KEGG" id="azo:azo3418"/>
<dbReference type="eggNOG" id="COG0051">
    <property type="taxonomic scope" value="Bacteria"/>
</dbReference>
<dbReference type="HOGENOM" id="CLU_122625_1_3_4"/>
<dbReference type="OrthoDB" id="9804464at2"/>
<dbReference type="Proteomes" id="UP000002588">
    <property type="component" value="Chromosome"/>
</dbReference>
<dbReference type="GO" id="GO:1990904">
    <property type="term" value="C:ribonucleoprotein complex"/>
    <property type="evidence" value="ECO:0007669"/>
    <property type="project" value="UniProtKB-KW"/>
</dbReference>
<dbReference type="GO" id="GO:0005840">
    <property type="term" value="C:ribosome"/>
    <property type="evidence" value="ECO:0007669"/>
    <property type="project" value="UniProtKB-KW"/>
</dbReference>
<dbReference type="GO" id="GO:0003735">
    <property type="term" value="F:structural constituent of ribosome"/>
    <property type="evidence" value="ECO:0007669"/>
    <property type="project" value="InterPro"/>
</dbReference>
<dbReference type="GO" id="GO:0000049">
    <property type="term" value="F:tRNA binding"/>
    <property type="evidence" value="ECO:0007669"/>
    <property type="project" value="UniProtKB-UniRule"/>
</dbReference>
<dbReference type="GO" id="GO:0006412">
    <property type="term" value="P:translation"/>
    <property type="evidence" value="ECO:0007669"/>
    <property type="project" value="UniProtKB-UniRule"/>
</dbReference>
<dbReference type="FunFam" id="3.30.70.600:FF:000001">
    <property type="entry name" value="30S ribosomal protein S10"/>
    <property type="match status" value="1"/>
</dbReference>
<dbReference type="Gene3D" id="3.30.70.600">
    <property type="entry name" value="Ribosomal protein S10 domain"/>
    <property type="match status" value="1"/>
</dbReference>
<dbReference type="HAMAP" id="MF_00508">
    <property type="entry name" value="Ribosomal_uS10"/>
    <property type="match status" value="1"/>
</dbReference>
<dbReference type="InterPro" id="IPR001848">
    <property type="entry name" value="Ribosomal_uS10"/>
</dbReference>
<dbReference type="InterPro" id="IPR018268">
    <property type="entry name" value="Ribosomal_uS10_CS"/>
</dbReference>
<dbReference type="InterPro" id="IPR027486">
    <property type="entry name" value="Ribosomal_uS10_dom"/>
</dbReference>
<dbReference type="InterPro" id="IPR036838">
    <property type="entry name" value="Ribosomal_uS10_dom_sf"/>
</dbReference>
<dbReference type="NCBIfam" id="NF001861">
    <property type="entry name" value="PRK00596.1"/>
    <property type="match status" value="1"/>
</dbReference>
<dbReference type="NCBIfam" id="TIGR01049">
    <property type="entry name" value="rpsJ_bact"/>
    <property type="match status" value="1"/>
</dbReference>
<dbReference type="PANTHER" id="PTHR11700">
    <property type="entry name" value="30S RIBOSOMAL PROTEIN S10 FAMILY MEMBER"/>
    <property type="match status" value="1"/>
</dbReference>
<dbReference type="Pfam" id="PF00338">
    <property type="entry name" value="Ribosomal_S10"/>
    <property type="match status" value="1"/>
</dbReference>
<dbReference type="PRINTS" id="PR00971">
    <property type="entry name" value="RIBOSOMALS10"/>
</dbReference>
<dbReference type="SMART" id="SM01403">
    <property type="entry name" value="Ribosomal_S10"/>
    <property type="match status" value="1"/>
</dbReference>
<dbReference type="SUPFAM" id="SSF54999">
    <property type="entry name" value="Ribosomal protein S10"/>
    <property type="match status" value="1"/>
</dbReference>
<dbReference type="PROSITE" id="PS00361">
    <property type="entry name" value="RIBOSOMAL_S10"/>
    <property type="match status" value="1"/>
</dbReference>
<accession>A1KB28</accession>
<name>RS10_AZOSB</name>
<proteinExistence type="inferred from homology"/>
<reference key="1">
    <citation type="journal article" date="2006" name="Nat. Biotechnol.">
        <title>Complete genome of the mutualistic, N2-fixing grass endophyte Azoarcus sp. strain BH72.</title>
        <authorList>
            <person name="Krause A."/>
            <person name="Ramakumar A."/>
            <person name="Bartels D."/>
            <person name="Battistoni F."/>
            <person name="Bekel T."/>
            <person name="Boch J."/>
            <person name="Boehm M."/>
            <person name="Friedrich F."/>
            <person name="Hurek T."/>
            <person name="Krause L."/>
            <person name="Linke B."/>
            <person name="McHardy A.C."/>
            <person name="Sarkar A."/>
            <person name="Schneiker S."/>
            <person name="Syed A.A."/>
            <person name="Thauer R."/>
            <person name="Vorhoelter F.-J."/>
            <person name="Weidner S."/>
            <person name="Puehler A."/>
            <person name="Reinhold-Hurek B."/>
            <person name="Kaiser O."/>
            <person name="Goesmann A."/>
        </authorList>
    </citation>
    <scope>NUCLEOTIDE SEQUENCE [LARGE SCALE GENOMIC DNA]</scope>
    <source>
        <strain>BH72</strain>
    </source>
</reference>
<gene>
    <name evidence="1" type="primary">rpsJ</name>
    <name type="ordered locus">azo3418</name>
</gene>
<organism>
    <name type="scientific">Azoarcus sp. (strain BH72)</name>
    <dbReference type="NCBI Taxonomy" id="418699"/>
    <lineage>
        <taxon>Bacteria</taxon>
        <taxon>Pseudomonadati</taxon>
        <taxon>Pseudomonadota</taxon>
        <taxon>Betaproteobacteria</taxon>
        <taxon>Rhodocyclales</taxon>
        <taxon>Zoogloeaceae</taxon>
        <taxon>Azoarcus</taxon>
    </lineage>
</organism>